<organism>
    <name type="scientific">Thermococcus kodakarensis (strain ATCC BAA-918 / JCM 12380 / KOD1)</name>
    <name type="common">Pyrococcus kodakaraensis (strain KOD1)</name>
    <dbReference type="NCBI Taxonomy" id="69014"/>
    <lineage>
        <taxon>Archaea</taxon>
        <taxon>Methanobacteriati</taxon>
        <taxon>Methanobacteriota</taxon>
        <taxon>Thermococci</taxon>
        <taxon>Thermococcales</taxon>
        <taxon>Thermococcaceae</taxon>
        <taxon>Thermococcus</taxon>
    </lineage>
</organism>
<sequence>MVHWADYMAEKIIRERGDKEEYVVESGITPSGYVHIGNFREFFTAYIVGHALRDRGKRVRHIHMWDDYDRFRKVPKNVPPEWKEHLTKPVREVPDPWGCHESYADHFMSLFEEEISKLGIEADFLHASELYKSGEYAKEIRLALEKRDEIKAILDKYRERAKQPPLEDSWQPVMIYCPHCRKEAEFVSWDGEWKVSYKCPHCGAEGETDIREGNVKLRWRVDWPMRWAHFKVDFEPAGKDHLAAGSSYDTGKEIVEKVFGWKAPLTLMYEFVGIKGQKGKMSGSKGNVILLSDLYEVLEPGIIRFIYAKARPNKELRIDLGLGLLNLYDEFDRVERIYFGLEHAKNPEEEEELKRTYELSMPKLPERLVAQAPFRFLVTLVQMPHLDEDGIIRILQEQGHVPENLTDDDIERIKLRIRLAKNWVEKYAPDDVKFSLLERPPEIELRPEIREAMLEVAEWLEEHERFSVDELNNVIFDAAKKRGIPSKEWFKALYNIFIGKDRGPRLAPFLASLNREFVIKRLRLEG</sequence>
<evidence type="ECO:0000250" key="1"/>
<evidence type="ECO:0000305" key="2"/>
<proteinExistence type="inferred from homology"/>
<reference key="1">
    <citation type="journal article" date="2005" name="Genome Res.">
        <title>Complete genome sequence of the hyperthermophilic archaeon Thermococcus kodakaraensis KOD1 and comparison with Pyrococcus genomes.</title>
        <authorList>
            <person name="Fukui T."/>
            <person name="Atomi H."/>
            <person name="Kanai T."/>
            <person name="Matsumi R."/>
            <person name="Fujiwara S."/>
            <person name="Imanaka T."/>
        </authorList>
    </citation>
    <scope>NUCLEOTIDE SEQUENCE [LARGE SCALE GENOMIC DNA]</scope>
    <source>
        <strain>ATCC BAA-918 / JCM 12380 / KOD1</strain>
    </source>
</reference>
<accession>Q5JHQ3</accession>
<name>SYK_THEKO</name>
<dbReference type="EC" id="6.1.1.6"/>
<dbReference type="EMBL" id="AP006878">
    <property type="protein sequence ID" value="BAD86429.1"/>
    <property type="molecule type" value="Genomic_DNA"/>
</dbReference>
<dbReference type="RefSeq" id="WP_011251190.1">
    <property type="nucleotide sequence ID" value="NC_006624.1"/>
</dbReference>
<dbReference type="SMR" id="Q5JHQ3"/>
<dbReference type="FunCoup" id="Q5JHQ3">
    <property type="interactions" value="19"/>
</dbReference>
<dbReference type="STRING" id="69014.TK2240"/>
<dbReference type="EnsemblBacteria" id="BAD86429">
    <property type="protein sequence ID" value="BAD86429"/>
    <property type="gene ID" value="TK2240"/>
</dbReference>
<dbReference type="GeneID" id="78448783"/>
<dbReference type="KEGG" id="tko:TK2240"/>
<dbReference type="PATRIC" id="fig|69014.16.peg.2195"/>
<dbReference type="eggNOG" id="arCOG00485">
    <property type="taxonomic scope" value="Archaea"/>
</dbReference>
<dbReference type="HOGENOM" id="CLU_025562_1_0_2"/>
<dbReference type="InParanoid" id="Q5JHQ3"/>
<dbReference type="OrthoDB" id="6838at2157"/>
<dbReference type="PhylomeDB" id="Q5JHQ3"/>
<dbReference type="Proteomes" id="UP000000536">
    <property type="component" value="Chromosome"/>
</dbReference>
<dbReference type="GO" id="GO:0005737">
    <property type="term" value="C:cytoplasm"/>
    <property type="evidence" value="ECO:0007669"/>
    <property type="project" value="UniProtKB-SubCell"/>
</dbReference>
<dbReference type="GO" id="GO:0005524">
    <property type="term" value="F:ATP binding"/>
    <property type="evidence" value="ECO:0007669"/>
    <property type="project" value="UniProtKB-UniRule"/>
</dbReference>
<dbReference type="GO" id="GO:0004824">
    <property type="term" value="F:lysine-tRNA ligase activity"/>
    <property type="evidence" value="ECO:0007669"/>
    <property type="project" value="UniProtKB-UniRule"/>
</dbReference>
<dbReference type="GO" id="GO:0046872">
    <property type="term" value="F:metal ion binding"/>
    <property type="evidence" value="ECO:0007669"/>
    <property type="project" value="UniProtKB-KW"/>
</dbReference>
<dbReference type="GO" id="GO:0000049">
    <property type="term" value="F:tRNA binding"/>
    <property type="evidence" value="ECO:0007669"/>
    <property type="project" value="InterPro"/>
</dbReference>
<dbReference type="GO" id="GO:0006430">
    <property type="term" value="P:lysyl-tRNA aminoacylation"/>
    <property type="evidence" value="ECO:0007669"/>
    <property type="project" value="UniProtKB-UniRule"/>
</dbReference>
<dbReference type="CDD" id="cd00674">
    <property type="entry name" value="LysRS_core_class_I"/>
    <property type="match status" value="1"/>
</dbReference>
<dbReference type="Gene3D" id="1.10.10.350">
    <property type="match status" value="1"/>
</dbReference>
<dbReference type="Gene3D" id="1.10.10.770">
    <property type="match status" value="1"/>
</dbReference>
<dbReference type="Gene3D" id="3.40.50.620">
    <property type="entry name" value="HUPs"/>
    <property type="match status" value="2"/>
</dbReference>
<dbReference type="Gene3D" id="6.10.20.10">
    <property type="entry name" value="Lysine tRNA ligase, stem contact fold domain"/>
    <property type="match status" value="1"/>
</dbReference>
<dbReference type="HAMAP" id="MF_00177">
    <property type="entry name" value="Lys_tRNA_synth_class1"/>
    <property type="match status" value="1"/>
</dbReference>
<dbReference type="InterPro" id="IPR045462">
    <property type="entry name" value="aa-tRNA-synth_I_cd-bd"/>
</dbReference>
<dbReference type="InterPro" id="IPR020751">
    <property type="entry name" value="aa-tRNA-synth_I_codon-bd_sub2"/>
</dbReference>
<dbReference type="InterPro" id="IPR001412">
    <property type="entry name" value="aa-tRNA-synth_I_CS"/>
</dbReference>
<dbReference type="InterPro" id="IPR008925">
    <property type="entry name" value="aa_tRNA-synth_I_cd-bd_sf"/>
</dbReference>
<dbReference type="InterPro" id="IPR002904">
    <property type="entry name" value="Lys-tRNA-ligase"/>
</dbReference>
<dbReference type="InterPro" id="IPR042078">
    <property type="entry name" value="Lys-tRNA-ligase_SC_fold"/>
</dbReference>
<dbReference type="InterPro" id="IPR014729">
    <property type="entry name" value="Rossmann-like_a/b/a_fold"/>
</dbReference>
<dbReference type="NCBIfam" id="TIGR00467">
    <property type="entry name" value="lysS_arch"/>
    <property type="match status" value="1"/>
</dbReference>
<dbReference type="PANTHER" id="PTHR37940">
    <property type="entry name" value="LYSINE--TRNA LIGASE"/>
    <property type="match status" value="1"/>
</dbReference>
<dbReference type="PANTHER" id="PTHR37940:SF1">
    <property type="entry name" value="LYSINE--TRNA LIGASE"/>
    <property type="match status" value="1"/>
</dbReference>
<dbReference type="Pfam" id="PF19269">
    <property type="entry name" value="Anticodon_2"/>
    <property type="match status" value="1"/>
</dbReference>
<dbReference type="Pfam" id="PF01921">
    <property type="entry name" value="tRNA-synt_1f"/>
    <property type="match status" value="1"/>
</dbReference>
<dbReference type="SUPFAM" id="SSF48163">
    <property type="entry name" value="An anticodon-binding domain of class I aminoacyl-tRNA synthetases"/>
    <property type="match status" value="1"/>
</dbReference>
<dbReference type="SUPFAM" id="SSF52374">
    <property type="entry name" value="Nucleotidylyl transferase"/>
    <property type="match status" value="1"/>
</dbReference>
<dbReference type="PROSITE" id="PS00178">
    <property type="entry name" value="AA_TRNA_LIGASE_I"/>
    <property type="match status" value="1"/>
</dbReference>
<feature type="chain" id="PRO_0000152761" description="Lysine--tRNA ligase">
    <location>
        <begin position="1"/>
        <end position="526"/>
    </location>
</feature>
<feature type="short sequence motif" description="'HIGH' region">
    <location>
        <begin position="30"/>
        <end position="38"/>
    </location>
</feature>
<feature type="short sequence motif" description="'KMSKS' region">
    <location>
        <begin position="280"/>
        <end position="284"/>
    </location>
</feature>
<feature type="binding site" evidence="1">
    <location>
        <position position="95"/>
    </location>
    <ligand>
        <name>Zn(2+)</name>
        <dbReference type="ChEBI" id="CHEBI:29105"/>
        <label>1</label>
    </ligand>
</feature>
<feature type="binding site" evidence="1">
    <location>
        <position position="99"/>
    </location>
    <ligand>
        <name>Zn(2+)</name>
        <dbReference type="ChEBI" id="CHEBI:29105"/>
        <label>1</label>
    </ligand>
</feature>
<feature type="binding site" evidence="1">
    <location>
        <position position="100"/>
    </location>
    <ligand>
        <name>Zn(2+)</name>
        <dbReference type="ChEBI" id="CHEBI:29105"/>
        <label>1</label>
    </ligand>
</feature>
<feature type="binding site" evidence="1">
    <location>
        <position position="106"/>
    </location>
    <ligand>
        <name>Zn(2+)</name>
        <dbReference type="ChEBI" id="CHEBI:29105"/>
        <label>1</label>
    </ligand>
</feature>
<feature type="binding site" evidence="1">
    <location>
        <position position="177"/>
    </location>
    <ligand>
        <name>Zn(2+)</name>
        <dbReference type="ChEBI" id="CHEBI:29105"/>
        <label>2</label>
    </ligand>
</feature>
<feature type="binding site" evidence="1">
    <location>
        <position position="199"/>
    </location>
    <ligand>
        <name>Zn(2+)</name>
        <dbReference type="ChEBI" id="CHEBI:29105"/>
        <label>2</label>
    </ligand>
</feature>
<comment type="catalytic activity">
    <reaction>
        <text>tRNA(Lys) + L-lysine + ATP = L-lysyl-tRNA(Lys) + AMP + diphosphate</text>
        <dbReference type="Rhea" id="RHEA:20792"/>
        <dbReference type="Rhea" id="RHEA-COMP:9696"/>
        <dbReference type="Rhea" id="RHEA-COMP:9697"/>
        <dbReference type="ChEBI" id="CHEBI:30616"/>
        <dbReference type="ChEBI" id="CHEBI:32551"/>
        <dbReference type="ChEBI" id="CHEBI:33019"/>
        <dbReference type="ChEBI" id="CHEBI:78442"/>
        <dbReference type="ChEBI" id="CHEBI:78529"/>
        <dbReference type="ChEBI" id="CHEBI:456215"/>
        <dbReference type="EC" id="6.1.1.6"/>
    </reaction>
</comment>
<comment type="cofactor">
    <cofactor evidence="1">
        <name>Zn(2+)</name>
        <dbReference type="ChEBI" id="CHEBI:29105"/>
    </cofactor>
    <text evidence="1">Binds 2 Zn(2+) ions per subunit.</text>
</comment>
<comment type="subcellular location">
    <subcellularLocation>
        <location evidence="1">Cytoplasm</location>
    </subcellularLocation>
</comment>
<comment type="similarity">
    <text evidence="2">Belongs to the class-I aminoacyl-tRNA synthetase family.</text>
</comment>
<protein>
    <recommendedName>
        <fullName>Lysine--tRNA ligase</fullName>
        <ecNumber>6.1.1.6</ecNumber>
    </recommendedName>
    <alternativeName>
        <fullName>Lysyl-tRNA synthetase</fullName>
        <shortName>LysRS</shortName>
    </alternativeName>
</protein>
<keyword id="KW-0030">Aminoacyl-tRNA synthetase</keyword>
<keyword id="KW-0067">ATP-binding</keyword>
<keyword id="KW-0963">Cytoplasm</keyword>
<keyword id="KW-0436">Ligase</keyword>
<keyword id="KW-0479">Metal-binding</keyword>
<keyword id="KW-0547">Nucleotide-binding</keyword>
<keyword id="KW-0648">Protein biosynthesis</keyword>
<keyword id="KW-1185">Reference proteome</keyword>
<keyword id="KW-0862">Zinc</keyword>
<gene>
    <name type="primary">lysS</name>
    <name type="ordered locus">TK2240</name>
</gene>